<dbReference type="EC" id="1.3.1.9" evidence="1"/>
<dbReference type="EMBL" id="CP000668">
    <property type="protein sequence ID" value="ABP42271.1"/>
    <property type="molecule type" value="Genomic_DNA"/>
</dbReference>
<dbReference type="RefSeq" id="WP_002215588.1">
    <property type="nucleotide sequence ID" value="NZ_CP009715.1"/>
</dbReference>
<dbReference type="SMR" id="A4TSK9"/>
<dbReference type="GeneID" id="57974620"/>
<dbReference type="KEGG" id="ypp:YPDSF_3930"/>
<dbReference type="PATRIC" id="fig|386656.14.peg.585"/>
<dbReference type="UniPathway" id="UPA00094"/>
<dbReference type="GO" id="GO:0004318">
    <property type="term" value="F:enoyl-[acyl-carrier-protein] reductase (NADH) activity"/>
    <property type="evidence" value="ECO:0007669"/>
    <property type="project" value="UniProtKB-UniRule"/>
</dbReference>
<dbReference type="GO" id="GO:0051287">
    <property type="term" value="F:NAD binding"/>
    <property type="evidence" value="ECO:0007669"/>
    <property type="project" value="UniProtKB-UniRule"/>
</dbReference>
<dbReference type="GO" id="GO:0050343">
    <property type="term" value="F:trans-2-enoyl-CoA reductase (NADH) activity"/>
    <property type="evidence" value="ECO:0007669"/>
    <property type="project" value="TreeGrafter"/>
</dbReference>
<dbReference type="GO" id="GO:0006633">
    <property type="term" value="P:fatty acid biosynthetic process"/>
    <property type="evidence" value="ECO:0007669"/>
    <property type="project" value="UniProtKB-UniRule"/>
</dbReference>
<dbReference type="FunFam" id="3.40.50.720:FF:000221">
    <property type="entry name" value="Enoyl-[acyl-carrier-protein] reductase [NADH]"/>
    <property type="match status" value="1"/>
</dbReference>
<dbReference type="Gene3D" id="3.40.50.720">
    <property type="entry name" value="NAD(P)-binding Rossmann-like Domain"/>
    <property type="match status" value="1"/>
</dbReference>
<dbReference type="HAMAP" id="MF_01838">
    <property type="entry name" value="FabV_reductase"/>
    <property type="match status" value="1"/>
</dbReference>
<dbReference type="InterPro" id="IPR024906">
    <property type="entry name" value="Eno_Rdtase_FAD-bd_dom"/>
</dbReference>
<dbReference type="InterPro" id="IPR024910">
    <property type="entry name" value="Enoyl-CoA_Rdtase_cat_dom"/>
</dbReference>
<dbReference type="InterPro" id="IPR050048">
    <property type="entry name" value="FabV-like_NADH_b"/>
</dbReference>
<dbReference type="InterPro" id="IPR010758">
    <property type="entry name" value="Trans-2-enoyl-CoA_reductase"/>
</dbReference>
<dbReference type="NCBIfam" id="NF043048">
    <property type="entry name" value="EnoyACPredFabV"/>
    <property type="match status" value="1"/>
</dbReference>
<dbReference type="NCBIfam" id="NF010177">
    <property type="entry name" value="PRK13656.1"/>
    <property type="match status" value="1"/>
</dbReference>
<dbReference type="PANTHER" id="PTHR37480">
    <property type="entry name" value="ENOYL-[ACYL-CARRIER-PROTEIN] REDUCTASE [NADH]"/>
    <property type="match status" value="1"/>
</dbReference>
<dbReference type="PANTHER" id="PTHR37480:SF1">
    <property type="entry name" value="ENOYL-[ACYL-CARRIER-PROTEIN] REDUCTASE [NADH]"/>
    <property type="match status" value="1"/>
</dbReference>
<dbReference type="Pfam" id="PF07055">
    <property type="entry name" value="Eno-Rase_FAD_bd"/>
    <property type="match status" value="1"/>
</dbReference>
<dbReference type="Pfam" id="PF12242">
    <property type="entry name" value="Eno-Rase_NADH_b"/>
    <property type="match status" value="1"/>
</dbReference>
<dbReference type="Pfam" id="PF12241">
    <property type="entry name" value="Enoyl_reductase"/>
    <property type="match status" value="1"/>
</dbReference>
<organism>
    <name type="scientific">Yersinia pestis (strain Pestoides F)</name>
    <dbReference type="NCBI Taxonomy" id="386656"/>
    <lineage>
        <taxon>Bacteria</taxon>
        <taxon>Pseudomonadati</taxon>
        <taxon>Pseudomonadota</taxon>
        <taxon>Gammaproteobacteria</taxon>
        <taxon>Enterobacterales</taxon>
        <taxon>Yersiniaceae</taxon>
        <taxon>Yersinia</taxon>
    </lineage>
</organism>
<protein>
    <recommendedName>
        <fullName evidence="1">Enoyl-[acyl-carrier-protein] reductase [NADH]</fullName>
        <shortName evidence="1">ENR</shortName>
        <ecNumber evidence="1">1.3.1.9</ecNumber>
    </recommendedName>
</protein>
<reference key="1">
    <citation type="submission" date="2007-02" db="EMBL/GenBank/DDBJ databases">
        <title>Complete sequence of chromosome of Yersinia pestis Pestoides F.</title>
        <authorList>
            <consortium name="US DOE Joint Genome Institute"/>
            <person name="Copeland A."/>
            <person name="Lucas S."/>
            <person name="Lapidus A."/>
            <person name="Barry K."/>
            <person name="Detter J.C."/>
            <person name="Glavina del Rio T."/>
            <person name="Hammon N."/>
            <person name="Israni S."/>
            <person name="Dalin E."/>
            <person name="Tice H."/>
            <person name="Pitluck S."/>
            <person name="Di Bartolo G."/>
            <person name="Chain P."/>
            <person name="Malfatti S."/>
            <person name="Shin M."/>
            <person name="Vergez L."/>
            <person name="Schmutz J."/>
            <person name="Larimer F."/>
            <person name="Land M."/>
            <person name="Hauser L."/>
            <person name="Worsham P."/>
            <person name="Chu M."/>
            <person name="Bearden S."/>
            <person name="Garcia E."/>
            <person name="Richardson P."/>
        </authorList>
    </citation>
    <scope>NUCLEOTIDE SEQUENCE [LARGE SCALE GENOMIC DNA]</scope>
    <source>
        <strain>Pestoides F</strain>
    </source>
</reference>
<comment type="function">
    <text evidence="1">Involved in the final reduction of the elongation cycle of fatty acid synthesis (FAS II). Catalyzes the reduction of a carbon-carbon double bond in an enoyl moiety that is covalently linked to an acyl carrier protein (ACP).</text>
</comment>
<comment type="catalytic activity">
    <reaction evidence="1">
        <text>a 2,3-saturated acyl-[ACP] + NAD(+) = a (2E)-enoyl-[ACP] + NADH + H(+)</text>
        <dbReference type="Rhea" id="RHEA:10240"/>
        <dbReference type="Rhea" id="RHEA-COMP:9925"/>
        <dbReference type="Rhea" id="RHEA-COMP:9926"/>
        <dbReference type="ChEBI" id="CHEBI:15378"/>
        <dbReference type="ChEBI" id="CHEBI:57540"/>
        <dbReference type="ChEBI" id="CHEBI:57945"/>
        <dbReference type="ChEBI" id="CHEBI:78784"/>
        <dbReference type="ChEBI" id="CHEBI:78785"/>
        <dbReference type="EC" id="1.3.1.9"/>
    </reaction>
</comment>
<comment type="pathway">
    <text evidence="1">Lipid metabolism; fatty acid biosynthesis.</text>
</comment>
<comment type="subunit">
    <text evidence="1">Monomer.</text>
</comment>
<comment type="similarity">
    <text evidence="1">Belongs to the TER reductase family.</text>
</comment>
<gene>
    <name evidence="1" type="primary">fabV</name>
    <name type="ordered locus">YPDSF_3930</name>
</gene>
<proteinExistence type="inferred from homology"/>
<feature type="chain" id="PRO_1000070511" description="Enoyl-[acyl-carrier-protein] reductase [NADH]">
    <location>
        <begin position="1"/>
        <end position="399"/>
    </location>
</feature>
<feature type="active site" description="Proton donor" evidence="1">
    <location>
        <position position="235"/>
    </location>
</feature>
<feature type="binding site" evidence="1">
    <location>
        <begin position="48"/>
        <end position="53"/>
    </location>
    <ligand>
        <name>NAD(+)</name>
        <dbReference type="ChEBI" id="CHEBI:57540"/>
    </ligand>
</feature>
<feature type="binding site" evidence="1">
    <location>
        <begin position="74"/>
        <end position="75"/>
    </location>
    <ligand>
        <name>NAD(+)</name>
        <dbReference type="ChEBI" id="CHEBI:57540"/>
    </ligand>
</feature>
<feature type="binding site" evidence="1">
    <location>
        <begin position="111"/>
        <end position="112"/>
    </location>
    <ligand>
        <name>NAD(+)</name>
        <dbReference type="ChEBI" id="CHEBI:57540"/>
    </ligand>
</feature>
<feature type="binding site" evidence="1">
    <location>
        <begin position="139"/>
        <end position="140"/>
    </location>
    <ligand>
        <name>NAD(+)</name>
        <dbReference type="ChEBI" id="CHEBI:57540"/>
    </ligand>
</feature>
<feature type="binding site" evidence="1">
    <location>
        <position position="225"/>
    </location>
    <ligand>
        <name>substrate</name>
    </ligand>
</feature>
<feature type="binding site" evidence="1">
    <location>
        <position position="244"/>
    </location>
    <ligand>
        <name>NAD(+)</name>
        <dbReference type="ChEBI" id="CHEBI:57540"/>
    </ligand>
</feature>
<feature type="binding site" evidence="1">
    <location>
        <begin position="274"/>
        <end position="276"/>
    </location>
    <ligand>
        <name>NAD(+)</name>
        <dbReference type="ChEBI" id="CHEBI:57540"/>
    </ligand>
</feature>
<feature type="site" description="Plays an important role in discriminating NADH against NADPH" evidence="1">
    <location>
        <position position="75"/>
    </location>
</feature>
<evidence type="ECO:0000255" key="1">
    <source>
        <dbReference type="HAMAP-Rule" id="MF_01838"/>
    </source>
</evidence>
<keyword id="KW-0275">Fatty acid biosynthesis</keyword>
<keyword id="KW-0276">Fatty acid metabolism</keyword>
<keyword id="KW-0444">Lipid biosynthesis</keyword>
<keyword id="KW-0443">Lipid metabolism</keyword>
<keyword id="KW-0520">NAD</keyword>
<keyword id="KW-0560">Oxidoreductase</keyword>
<accession>A4TSK9</accession>
<name>FABV_YERPP</name>
<sequence>MIIKPRVRGFICVTAHPTGCEANVKKQIDYVTTEGPIANGPKRVLVIGASTGYGLAARITAAFGCGADTLGVFFERPGEEGKPGTSGWYNSAAFHKFAAQKGLYAKSINGDAFSDEIKQLTIDAIKQDLGQVDQVIYSLASPRRTHPKTGEVFNSALKPIGNAVNLRGLDTDKEVIKESVLQPATQSEIDSTVAVMGGEDWQMWIDALLDAGVLAEGAQTTAFTYLGEKITHDIYWNGSIGAAKKDLDQKVLAIRESLAAHGGGDARVSVLKAVVTQASSAIPMMPLYLSLLFKVMKEKGTHEGCIEQVYSLYKDSLCGDSPHMDQEGRLRADYKELDPEVQNQVQQLWDQVTNDNIYQLTDFVGYKSEFLNLFGFGIDGVDYDADVNPDVKIPNLIQG</sequence>